<dbReference type="EMBL" id="FM200053">
    <property type="protein sequence ID" value="CAR59066.1"/>
    <property type="molecule type" value="Genomic_DNA"/>
</dbReference>
<dbReference type="RefSeq" id="WP_001042123.1">
    <property type="nucleotide sequence ID" value="NC_011147.1"/>
</dbReference>
<dbReference type="SMR" id="B5BH73"/>
<dbReference type="KEGG" id="sek:SSPA0921"/>
<dbReference type="HOGENOM" id="CLU_161319_1_0_6"/>
<dbReference type="Proteomes" id="UP000001869">
    <property type="component" value="Chromosome"/>
</dbReference>
<dbReference type="GO" id="GO:0005576">
    <property type="term" value="C:extracellular region"/>
    <property type="evidence" value="ECO:0007669"/>
    <property type="project" value="UniProtKB-SubCell"/>
</dbReference>
<dbReference type="Gene3D" id="3.10.450.300">
    <property type="entry name" value="YebF/Colicin-M immunity protein"/>
    <property type="match status" value="1"/>
</dbReference>
<dbReference type="HAMAP" id="MF_01435">
    <property type="entry name" value="YebF"/>
    <property type="match status" value="1"/>
</dbReference>
<dbReference type="InterPro" id="IPR020236">
    <property type="entry name" value="Uncharacterised_YebF"/>
</dbReference>
<dbReference type="InterPro" id="IPR038703">
    <property type="entry name" value="YebF/Cmi_sf"/>
</dbReference>
<dbReference type="InterPro" id="IPR025603">
    <property type="entry name" value="YebF/ColM_immunity"/>
</dbReference>
<dbReference type="NCBIfam" id="NF010224">
    <property type="entry name" value="PRK13680.1"/>
    <property type="match status" value="1"/>
</dbReference>
<dbReference type="NCBIfam" id="NF041240">
    <property type="entry name" value="YebF_not_Cmi"/>
    <property type="match status" value="1"/>
</dbReference>
<dbReference type="Pfam" id="PF13995">
    <property type="entry name" value="YebF"/>
    <property type="match status" value="1"/>
</dbReference>
<dbReference type="PROSITE" id="PS51979">
    <property type="entry name" value="YEBF_CMI"/>
    <property type="match status" value="1"/>
</dbReference>
<gene>
    <name evidence="1" type="primary">yebF</name>
    <name type="ordered locus">SSPA0921</name>
</gene>
<evidence type="ECO:0000255" key="1">
    <source>
        <dbReference type="HAMAP-Rule" id="MF_01435"/>
    </source>
</evidence>
<evidence type="ECO:0000255" key="2">
    <source>
        <dbReference type="PROSITE-ProRule" id="PRU01323"/>
    </source>
</evidence>
<comment type="subcellular location">
    <subcellularLocation>
        <location evidence="1">Secreted</location>
    </subcellularLocation>
</comment>
<comment type="similarity">
    <text evidence="1">Belongs to the YebF family.</text>
</comment>
<keyword id="KW-1015">Disulfide bond</keyword>
<keyword id="KW-0964">Secreted</keyword>
<keyword id="KW-0732">Signal</keyword>
<organism>
    <name type="scientific">Salmonella paratyphi A (strain AKU_12601)</name>
    <dbReference type="NCBI Taxonomy" id="554290"/>
    <lineage>
        <taxon>Bacteria</taxon>
        <taxon>Pseudomonadati</taxon>
        <taxon>Pseudomonadota</taxon>
        <taxon>Gammaproteobacteria</taxon>
        <taxon>Enterobacterales</taxon>
        <taxon>Enterobacteriaceae</taxon>
        <taxon>Salmonella</taxon>
    </lineage>
</organism>
<proteinExistence type="inferred from homology"/>
<protein>
    <recommendedName>
        <fullName evidence="1">Protein YebF</fullName>
    </recommendedName>
</protein>
<accession>B5BH73</accession>
<sequence length="117" mass="12774">MNKRGALLSLLLLSASVSAFAASTESKSVKFPQCEGLDAAGIAASVKRDYQQNRIVRWADDQKKVGQADPVAWVNVQDVVGQNDKWTVPLTVRGKSADIHYQVIVDCKAGKAEYKPR</sequence>
<reference key="1">
    <citation type="journal article" date="2009" name="BMC Genomics">
        <title>Pseudogene accumulation in the evolutionary histories of Salmonella enterica serovars Paratyphi A and Typhi.</title>
        <authorList>
            <person name="Holt K.E."/>
            <person name="Thomson N.R."/>
            <person name="Wain J."/>
            <person name="Langridge G.C."/>
            <person name="Hasan R."/>
            <person name="Bhutta Z.A."/>
            <person name="Quail M.A."/>
            <person name="Norbertczak H."/>
            <person name="Walker D."/>
            <person name="Simmonds M."/>
            <person name="White B."/>
            <person name="Bason N."/>
            <person name="Mungall K."/>
            <person name="Dougan G."/>
            <person name="Parkhill J."/>
        </authorList>
    </citation>
    <scope>NUCLEOTIDE SEQUENCE [LARGE SCALE GENOMIC DNA]</scope>
    <source>
        <strain>AKU_12601</strain>
    </source>
</reference>
<name>YEBF_SALPK</name>
<feature type="signal peptide" evidence="1">
    <location>
        <begin position="1"/>
        <end position="21"/>
    </location>
</feature>
<feature type="chain" id="PRO_1000145840" description="Protein YebF">
    <location>
        <begin position="22"/>
        <end position="117"/>
    </location>
</feature>
<feature type="domain" description="YebF/Cmi" evidence="2">
    <location>
        <begin position="30"/>
        <end position="117"/>
    </location>
</feature>
<feature type="disulfide bond" evidence="2">
    <location>
        <begin position="34"/>
        <end position="107"/>
    </location>
</feature>